<accession>A9VIR5</accession>
<protein>
    <recommendedName>
        <fullName evidence="1">GTPase Obg</fullName>
        <ecNumber evidence="1">3.6.5.-</ecNumber>
    </recommendedName>
    <alternativeName>
        <fullName evidence="1">GTP-binding protein Obg</fullName>
    </alternativeName>
</protein>
<reference key="1">
    <citation type="journal article" date="2008" name="Chem. Biol. Interact.">
        <title>Extending the Bacillus cereus group genomics to putative food-borne pathogens of different toxicity.</title>
        <authorList>
            <person name="Lapidus A."/>
            <person name="Goltsman E."/>
            <person name="Auger S."/>
            <person name="Galleron N."/>
            <person name="Segurens B."/>
            <person name="Dossat C."/>
            <person name="Land M.L."/>
            <person name="Broussolle V."/>
            <person name="Brillard J."/>
            <person name="Guinebretiere M.-H."/>
            <person name="Sanchis V."/>
            <person name="Nguen-the C."/>
            <person name="Lereclus D."/>
            <person name="Richardson P."/>
            <person name="Wincker P."/>
            <person name="Weissenbach J."/>
            <person name="Ehrlich S.D."/>
            <person name="Sorokin A."/>
        </authorList>
    </citation>
    <scope>NUCLEOTIDE SEQUENCE [LARGE SCALE GENOMIC DNA]</scope>
    <source>
        <strain>KBAB4</strain>
    </source>
</reference>
<dbReference type="EC" id="3.6.5.-" evidence="1"/>
<dbReference type="EMBL" id="CP000903">
    <property type="protein sequence ID" value="ABY45445.1"/>
    <property type="molecule type" value="Genomic_DNA"/>
</dbReference>
<dbReference type="SMR" id="A9VIR5"/>
<dbReference type="KEGG" id="bwe:BcerKBAB4_4286"/>
<dbReference type="eggNOG" id="COG0536">
    <property type="taxonomic scope" value="Bacteria"/>
</dbReference>
<dbReference type="HOGENOM" id="CLU_011747_2_1_9"/>
<dbReference type="Proteomes" id="UP000002154">
    <property type="component" value="Chromosome"/>
</dbReference>
<dbReference type="GO" id="GO:0005737">
    <property type="term" value="C:cytoplasm"/>
    <property type="evidence" value="ECO:0007669"/>
    <property type="project" value="UniProtKB-SubCell"/>
</dbReference>
<dbReference type="GO" id="GO:0005525">
    <property type="term" value="F:GTP binding"/>
    <property type="evidence" value="ECO:0007669"/>
    <property type="project" value="UniProtKB-UniRule"/>
</dbReference>
<dbReference type="GO" id="GO:0003924">
    <property type="term" value="F:GTPase activity"/>
    <property type="evidence" value="ECO:0007669"/>
    <property type="project" value="UniProtKB-UniRule"/>
</dbReference>
<dbReference type="GO" id="GO:0000287">
    <property type="term" value="F:magnesium ion binding"/>
    <property type="evidence" value="ECO:0007669"/>
    <property type="project" value="InterPro"/>
</dbReference>
<dbReference type="GO" id="GO:0042254">
    <property type="term" value="P:ribosome biogenesis"/>
    <property type="evidence" value="ECO:0007669"/>
    <property type="project" value="UniProtKB-UniRule"/>
</dbReference>
<dbReference type="CDD" id="cd01898">
    <property type="entry name" value="Obg"/>
    <property type="match status" value="1"/>
</dbReference>
<dbReference type="FunFam" id="2.70.210.12:FF:000001">
    <property type="entry name" value="GTPase Obg"/>
    <property type="match status" value="1"/>
</dbReference>
<dbReference type="FunFam" id="3.40.50.300:FF:000515">
    <property type="entry name" value="GTPase Obg"/>
    <property type="match status" value="1"/>
</dbReference>
<dbReference type="Gene3D" id="3.30.300.350">
    <property type="entry name" value="GTP-binding protein OBG, C-terminal domain"/>
    <property type="match status" value="1"/>
</dbReference>
<dbReference type="Gene3D" id="2.70.210.12">
    <property type="entry name" value="GTP1/OBG domain"/>
    <property type="match status" value="1"/>
</dbReference>
<dbReference type="Gene3D" id="3.40.50.300">
    <property type="entry name" value="P-loop containing nucleotide triphosphate hydrolases"/>
    <property type="match status" value="1"/>
</dbReference>
<dbReference type="HAMAP" id="MF_01454">
    <property type="entry name" value="GTPase_Obg"/>
    <property type="match status" value="1"/>
</dbReference>
<dbReference type="InterPro" id="IPR031167">
    <property type="entry name" value="G_OBG"/>
</dbReference>
<dbReference type="InterPro" id="IPR006073">
    <property type="entry name" value="GTP-bd"/>
</dbReference>
<dbReference type="InterPro" id="IPR014100">
    <property type="entry name" value="GTP-bd_Obg/CgtA"/>
</dbReference>
<dbReference type="InterPro" id="IPR036346">
    <property type="entry name" value="GTP-bd_prot_GTP1/OBG_C_sf"/>
</dbReference>
<dbReference type="InterPro" id="IPR006074">
    <property type="entry name" value="GTP1-OBG_CS"/>
</dbReference>
<dbReference type="InterPro" id="IPR006169">
    <property type="entry name" value="GTP1_OBG_dom"/>
</dbReference>
<dbReference type="InterPro" id="IPR036726">
    <property type="entry name" value="GTP1_OBG_dom_sf"/>
</dbReference>
<dbReference type="InterPro" id="IPR045086">
    <property type="entry name" value="OBG_GTPase"/>
</dbReference>
<dbReference type="InterPro" id="IPR015349">
    <property type="entry name" value="OCT_dom"/>
</dbReference>
<dbReference type="InterPro" id="IPR027417">
    <property type="entry name" value="P-loop_NTPase"/>
</dbReference>
<dbReference type="InterPro" id="IPR005225">
    <property type="entry name" value="Small_GTP-bd"/>
</dbReference>
<dbReference type="NCBIfam" id="TIGR02729">
    <property type="entry name" value="Obg_CgtA"/>
    <property type="match status" value="1"/>
</dbReference>
<dbReference type="NCBIfam" id="TIGR03595">
    <property type="entry name" value="Obg_CgtA_exten"/>
    <property type="match status" value="1"/>
</dbReference>
<dbReference type="NCBIfam" id="NF008954">
    <property type="entry name" value="PRK12296.1"/>
    <property type="match status" value="1"/>
</dbReference>
<dbReference type="NCBIfam" id="NF008955">
    <property type="entry name" value="PRK12297.1"/>
    <property type="match status" value="1"/>
</dbReference>
<dbReference type="NCBIfam" id="NF008956">
    <property type="entry name" value="PRK12299.1"/>
    <property type="match status" value="1"/>
</dbReference>
<dbReference type="NCBIfam" id="TIGR00231">
    <property type="entry name" value="small_GTP"/>
    <property type="match status" value="1"/>
</dbReference>
<dbReference type="PANTHER" id="PTHR11702">
    <property type="entry name" value="DEVELOPMENTALLY REGULATED GTP-BINDING PROTEIN-RELATED"/>
    <property type="match status" value="1"/>
</dbReference>
<dbReference type="PANTHER" id="PTHR11702:SF31">
    <property type="entry name" value="MITOCHONDRIAL RIBOSOME-ASSOCIATED GTPASE 2"/>
    <property type="match status" value="1"/>
</dbReference>
<dbReference type="Pfam" id="PF09269">
    <property type="entry name" value="DUF1967"/>
    <property type="match status" value="1"/>
</dbReference>
<dbReference type="Pfam" id="PF01018">
    <property type="entry name" value="GTP1_OBG"/>
    <property type="match status" value="1"/>
</dbReference>
<dbReference type="Pfam" id="PF01926">
    <property type="entry name" value="MMR_HSR1"/>
    <property type="match status" value="1"/>
</dbReference>
<dbReference type="PIRSF" id="PIRSF002401">
    <property type="entry name" value="GTP_bd_Obg/CgtA"/>
    <property type="match status" value="1"/>
</dbReference>
<dbReference type="PRINTS" id="PR00326">
    <property type="entry name" value="GTP1OBG"/>
</dbReference>
<dbReference type="SUPFAM" id="SSF102741">
    <property type="entry name" value="Obg GTP-binding protein C-terminal domain"/>
    <property type="match status" value="1"/>
</dbReference>
<dbReference type="SUPFAM" id="SSF82051">
    <property type="entry name" value="Obg GTP-binding protein N-terminal domain"/>
    <property type="match status" value="1"/>
</dbReference>
<dbReference type="SUPFAM" id="SSF52540">
    <property type="entry name" value="P-loop containing nucleoside triphosphate hydrolases"/>
    <property type="match status" value="1"/>
</dbReference>
<dbReference type="PROSITE" id="PS51710">
    <property type="entry name" value="G_OBG"/>
    <property type="match status" value="1"/>
</dbReference>
<dbReference type="PROSITE" id="PS00905">
    <property type="entry name" value="GTP1_OBG"/>
    <property type="match status" value="1"/>
</dbReference>
<dbReference type="PROSITE" id="PS51883">
    <property type="entry name" value="OBG"/>
    <property type="match status" value="1"/>
</dbReference>
<dbReference type="PROSITE" id="PS51881">
    <property type="entry name" value="OCT"/>
    <property type="match status" value="1"/>
</dbReference>
<organism>
    <name type="scientific">Bacillus mycoides (strain KBAB4)</name>
    <name type="common">Bacillus weihenstephanensis</name>
    <dbReference type="NCBI Taxonomy" id="315730"/>
    <lineage>
        <taxon>Bacteria</taxon>
        <taxon>Bacillati</taxon>
        <taxon>Bacillota</taxon>
        <taxon>Bacilli</taxon>
        <taxon>Bacillales</taxon>
        <taxon>Bacillaceae</taxon>
        <taxon>Bacillus</taxon>
        <taxon>Bacillus cereus group</taxon>
    </lineage>
</organism>
<name>OBG_BACMK</name>
<evidence type="ECO:0000255" key="1">
    <source>
        <dbReference type="HAMAP-Rule" id="MF_01454"/>
    </source>
</evidence>
<evidence type="ECO:0000255" key="2">
    <source>
        <dbReference type="PROSITE-ProRule" id="PRU01229"/>
    </source>
</evidence>
<evidence type="ECO:0000255" key="3">
    <source>
        <dbReference type="PROSITE-ProRule" id="PRU01231"/>
    </source>
</evidence>
<comment type="function">
    <text evidence="1">An essential GTPase which binds GTP, GDP and possibly (p)ppGpp with moderate affinity, with high nucleotide exchange rates and a fairly low GTP hydrolysis rate. Plays a role in control of the cell cycle, stress response, ribosome biogenesis and in those bacteria that undergo differentiation, in morphogenesis control.</text>
</comment>
<comment type="cofactor">
    <cofactor evidence="1">
        <name>Mg(2+)</name>
        <dbReference type="ChEBI" id="CHEBI:18420"/>
    </cofactor>
</comment>
<comment type="subunit">
    <text evidence="1">Monomer.</text>
</comment>
<comment type="subcellular location">
    <subcellularLocation>
        <location evidence="1">Cytoplasm</location>
    </subcellularLocation>
</comment>
<comment type="similarity">
    <text evidence="1">Belongs to the TRAFAC class OBG-HflX-like GTPase superfamily. OBG GTPase family.</text>
</comment>
<gene>
    <name evidence="1" type="primary">obg</name>
    <name type="ordered locus">BcerKBAB4_4286</name>
</gene>
<sequence>MFVDQVKIYVKGGDGGNGMVAYRREKYVPKGGPAGGDGGKGADVVFVVEEGLRTLMDFRYQRHFKADRGQHGMSKGQHGRKSEDLIVKVPPGTIVKDEKTGEILADLVTHEQTAVIARGGRGGRGNSRFATATNPAPEIAENGEPGQERDVTLELKVLADVGLVGFPSVGKSTLLSVVSSARPKIAEYHFTTIVPNLGVVETGDNRSFVMADLPGLIEGAHSGVGLGHQFLRHIERTRVIVHVIDMSGLEGREPYEDYVTINNELKEYNMRLTERPQVVVANKMDMPDAEENLQAFKEKLGDEVKIFPISAVTKQGVRDLLFEVANLLETTPEFPMYDDVEESEASVMYKFESESNFEITRESDGTFVISGYDIEKTFKMTDFSRDESVRRFARQMRGMGIDEALRARGATDGDIVKILEYQFEFID</sequence>
<keyword id="KW-0963">Cytoplasm</keyword>
<keyword id="KW-0342">GTP-binding</keyword>
<keyword id="KW-0378">Hydrolase</keyword>
<keyword id="KW-0460">Magnesium</keyword>
<keyword id="KW-0479">Metal-binding</keyword>
<keyword id="KW-0547">Nucleotide-binding</keyword>
<feature type="chain" id="PRO_0000385730" description="GTPase Obg">
    <location>
        <begin position="1"/>
        <end position="427"/>
    </location>
</feature>
<feature type="domain" description="Obg" evidence="3">
    <location>
        <begin position="1"/>
        <end position="158"/>
    </location>
</feature>
<feature type="domain" description="OBG-type G" evidence="1">
    <location>
        <begin position="159"/>
        <end position="329"/>
    </location>
</feature>
<feature type="domain" description="OCT" evidence="2">
    <location>
        <begin position="349"/>
        <end position="427"/>
    </location>
</feature>
<feature type="binding site" evidence="1">
    <location>
        <begin position="165"/>
        <end position="172"/>
    </location>
    <ligand>
        <name>GTP</name>
        <dbReference type="ChEBI" id="CHEBI:37565"/>
    </ligand>
</feature>
<feature type="binding site" evidence="1">
    <location>
        <position position="172"/>
    </location>
    <ligand>
        <name>Mg(2+)</name>
        <dbReference type="ChEBI" id="CHEBI:18420"/>
    </ligand>
</feature>
<feature type="binding site" evidence="1">
    <location>
        <begin position="190"/>
        <end position="194"/>
    </location>
    <ligand>
        <name>GTP</name>
        <dbReference type="ChEBI" id="CHEBI:37565"/>
    </ligand>
</feature>
<feature type="binding site" evidence="1">
    <location>
        <position position="192"/>
    </location>
    <ligand>
        <name>Mg(2+)</name>
        <dbReference type="ChEBI" id="CHEBI:18420"/>
    </ligand>
</feature>
<feature type="binding site" evidence="1">
    <location>
        <begin position="212"/>
        <end position="215"/>
    </location>
    <ligand>
        <name>GTP</name>
        <dbReference type="ChEBI" id="CHEBI:37565"/>
    </ligand>
</feature>
<feature type="binding site" evidence="1">
    <location>
        <begin position="282"/>
        <end position="285"/>
    </location>
    <ligand>
        <name>GTP</name>
        <dbReference type="ChEBI" id="CHEBI:37565"/>
    </ligand>
</feature>
<feature type="binding site" evidence="1">
    <location>
        <begin position="310"/>
        <end position="312"/>
    </location>
    <ligand>
        <name>GTP</name>
        <dbReference type="ChEBI" id="CHEBI:37565"/>
    </ligand>
</feature>
<proteinExistence type="inferred from homology"/>